<protein>
    <recommendedName>
        <fullName evidence="1">Enoyl-[acyl-carrier-protein] reductase [NADH] 1</fullName>
        <shortName evidence="1">ENR 1</shortName>
        <ecNumber evidence="1">1.3.1.9</ecNumber>
    </recommendedName>
</protein>
<reference key="1">
    <citation type="submission" date="2002-12" db="EMBL/GenBank/DDBJ databases">
        <title>Complete genome sequence of Vibrio vulnificus CMCP6.</title>
        <authorList>
            <person name="Rhee J.H."/>
            <person name="Kim S.Y."/>
            <person name="Chung S.S."/>
            <person name="Kim J.J."/>
            <person name="Moon Y.H."/>
            <person name="Jeong H."/>
            <person name="Choy H.E."/>
        </authorList>
    </citation>
    <scope>NUCLEOTIDE SEQUENCE [LARGE SCALE GENOMIC DNA]</scope>
    <source>
        <strain>CMCP6</strain>
    </source>
</reference>
<name>FABV1_VIBVU</name>
<sequence>MIIKPKIRGFICTTTHPVGCEANVKEQIAYTKAQGPIKNAPKRVLVVGASSGYGLSSRIAAAFGGGAATIGVFFEKEGSEKKPGTAGFYNAAAFEKLAREEGLYAKSLNGDAFSNEAKQKTIDLIKEDLGQVDMVVYSLASPVRKLPETGELIRSALKPIGQTYTSTAVDTNKDIIIEASVEPATEQEIQDTVTVMGGEDWELWINALAEAGVLADGCKTVAYSYIGTELTWPIYWDGALGKAKMDLDRAASALNDKLSATGGSANVAVLKSVVTQASSAIPVMPLYIAMVFKKMREEGVHEGCMEQIYRMFSQRLYKEDGSAAEVDEKNRLRLDDWELRDDIQEHCRNLWPQITTENLKELTDYVEYKEEFLKLFGFGIDGVDYEADVNPDVATDFIAI</sequence>
<feature type="chain" id="PRO_0000220056" description="Enoyl-[acyl-carrier-protein] reductase [NADH] 1">
    <location>
        <begin position="1"/>
        <end position="400"/>
    </location>
</feature>
<feature type="active site" description="Proton donor" evidence="1">
    <location>
        <position position="235"/>
    </location>
</feature>
<feature type="binding site" evidence="1">
    <location>
        <begin position="48"/>
        <end position="53"/>
    </location>
    <ligand>
        <name>NAD(+)</name>
        <dbReference type="ChEBI" id="CHEBI:57540"/>
    </ligand>
</feature>
<feature type="binding site" evidence="1">
    <location>
        <begin position="74"/>
        <end position="75"/>
    </location>
    <ligand>
        <name>NAD(+)</name>
        <dbReference type="ChEBI" id="CHEBI:57540"/>
    </ligand>
</feature>
<feature type="binding site" evidence="1">
    <location>
        <begin position="111"/>
        <end position="112"/>
    </location>
    <ligand>
        <name>NAD(+)</name>
        <dbReference type="ChEBI" id="CHEBI:57540"/>
    </ligand>
</feature>
<feature type="binding site" evidence="1">
    <location>
        <begin position="139"/>
        <end position="140"/>
    </location>
    <ligand>
        <name>NAD(+)</name>
        <dbReference type="ChEBI" id="CHEBI:57540"/>
    </ligand>
</feature>
<feature type="binding site" evidence="1">
    <location>
        <position position="225"/>
    </location>
    <ligand>
        <name>substrate</name>
    </ligand>
</feature>
<feature type="binding site" evidence="1">
    <location>
        <position position="244"/>
    </location>
    <ligand>
        <name>NAD(+)</name>
        <dbReference type="ChEBI" id="CHEBI:57540"/>
    </ligand>
</feature>
<feature type="binding site" evidence="1">
    <location>
        <begin position="273"/>
        <end position="275"/>
    </location>
    <ligand>
        <name>NAD(+)</name>
        <dbReference type="ChEBI" id="CHEBI:57540"/>
    </ligand>
</feature>
<feature type="site" description="Plays an important role in discriminating NADH against NADPH" evidence="1">
    <location>
        <position position="75"/>
    </location>
</feature>
<accession>Q8D8Y6</accession>
<proteinExistence type="inferred from homology"/>
<keyword id="KW-0275">Fatty acid biosynthesis</keyword>
<keyword id="KW-0276">Fatty acid metabolism</keyword>
<keyword id="KW-0444">Lipid biosynthesis</keyword>
<keyword id="KW-0443">Lipid metabolism</keyword>
<keyword id="KW-0520">NAD</keyword>
<keyword id="KW-0560">Oxidoreductase</keyword>
<evidence type="ECO:0000255" key="1">
    <source>
        <dbReference type="HAMAP-Rule" id="MF_01838"/>
    </source>
</evidence>
<comment type="function">
    <text evidence="1">Involved in the final reduction of the elongation cycle of fatty acid synthesis (FAS II). Catalyzes the reduction of a carbon-carbon double bond in an enoyl moiety that is covalently linked to an acyl carrier protein (ACP).</text>
</comment>
<comment type="catalytic activity">
    <reaction evidence="1">
        <text>a 2,3-saturated acyl-[ACP] + NAD(+) = a (2E)-enoyl-[ACP] + NADH + H(+)</text>
        <dbReference type="Rhea" id="RHEA:10240"/>
        <dbReference type="Rhea" id="RHEA-COMP:9925"/>
        <dbReference type="Rhea" id="RHEA-COMP:9926"/>
        <dbReference type="ChEBI" id="CHEBI:15378"/>
        <dbReference type="ChEBI" id="CHEBI:57540"/>
        <dbReference type="ChEBI" id="CHEBI:57945"/>
        <dbReference type="ChEBI" id="CHEBI:78784"/>
        <dbReference type="ChEBI" id="CHEBI:78785"/>
        <dbReference type="EC" id="1.3.1.9"/>
    </reaction>
</comment>
<comment type="pathway">
    <text evidence="1">Lipid metabolism; fatty acid biosynthesis.</text>
</comment>
<comment type="subunit">
    <text evidence="1">Monomer.</text>
</comment>
<comment type="similarity">
    <text evidence="1">Belongs to the TER reductase family.</text>
</comment>
<dbReference type="EC" id="1.3.1.9" evidence="1"/>
<dbReference type="EMBL" id="AE016795">
    <property type="protein sequence ID" value="AAO11166.1"/>
    <property type="molecule type" value="Genomic_DNA"/>
</dbReference>
<dbReference type="SMR" id="Q8D8Y6"/>
<dbReference type="KEGG" id="vvu:VV1_2829"/>
<dbReference type="HOGENOM" id="CLU_057698_1_0_6"/>
<dbReference type="UniPathway" id="UPA00094"/>
<dbReference type="Proteomes" id="UP000002275">
    <property type="component" value="Chromosome 1"/>
</dbReference>
<dbReference type="GO" id="GO:0004318">
    <property type="term" value="F:enoyl-[acyl-carrier-protein] reductase (NADH) activity"/>
    <property type="evidence" value="ECO:0007669"/>
    <property type="project" value="UniProtKB-UniRule"/>
</dbReference>
<dbReference type="GO" id="GO:0051287">
    <property type="term" value="F:NAD binding"/>
    <property type="evidence" value="ECO:0007669"/>
    <property type="project" value="UniProtKB-UniRule"/>
</dbReference>
<dbReference type="GO" id="GO:0050343">
    <property type="term" value="F:trans-2-enoyl-CoA reductase (NADH) activity"/>
    <property type="evidence" value="ECO:0007669"/>
    <property type="project" value="TreeGrafter"/>
</dbReference>
<dbReference type="GO" id="GO:0006633">
    <property type="term" value="P:fatty acid biosynthetic process"/>
    <property type="evidence" value="ECO:0007669"/>
    <property type="project" value="UniProtKB-UniRule"/>
</dbReference>
<dbReference type="FunFam" id="3.40.50.720:FF:000221">
    <property type="entry name" value="Enoyl-[acyl-carrier-protein] reductase [NADH]"/>
    <property type="match status" value="1"/>
</dbReference>
<dbReference type="Gene3D" id="3.40.50.720">
    <property type="entry name" value="NAD(P)-binding Rossmann-like Domain"/>
    <property type="match status" value="1"/>
</dbReference>
<dbReference type="HAMAP" id="MF_01838">
    <property type="entry name" value="FabV_reductase"/>
    <property type="match status" value="1"/>
</dbReference>
<dbReference type="InterPro" id="IPR024906">
    <property type="entry name" value="Eno_Rdtase_FAD-bd_dom"/>
</dbReference>
<dbReference type="InterPro" id="IPR024910">
    <property type="entry name" value="Enoyl-CoA_Rdtase_cat_dom"/>
</dbReference>
<dbReference type="InterPro" id="IPR050048">
    <property type="entry name" value="FabV-like_NADH_b"/>
</dbReference>
<dbReference type="InterPro" id="IPR010758">
    <property type="entry name" value="Trans-2-enoyl-CoA_reductase"/>
</dbReference>
<dbReference type="NCBIfam" id="NF043048">
    <property type="entry name" value="EnoyACPredFabV"/>
    <property type="match status" value="1"/>
</dbReference>
<dbReference type="NCBIfam" id="NF010177">
    <property type="entry name" value="PRK13656.1"/>
    <property type="match status" value="1"/>
</dbReference>
<dbReference type="PANTHER" id="PTHR37480">
    <property type="entry name" value="ENOYL-[ACYL-CARRIER-PROTEIN] REDUCTASE [NADH]"/>
    <property type="match status" value="1"/>
</dbReference>
<dbReference type="PANTHER" id="PTHR37480:SF1">
    <property type="entry name" value="ENOYL-[ACYL-CARRIER-PROTEIN] REDUCTASE [NADH]"/>
    <property type="match status" value="1"/>
</dbReference>
<dbReference type="Pfam" id="PF07055">
    <property type="entry name" value="Eno-Rase_FAD_bd"/>
    <property type="match status" value="1"/>
</dbReference>
<dbReference type="Pfam" id="PF12242">
    <property type="entry name" value="Eno-Rase_NADH_b"/>
    <property type="match status" value="1"/>
</dbReference>
<dbReference type="Pfam" id="PF12241">
    <property type="entry name" value="Enoyl_reductase"/>
    <property type="match status" value="1"/>
</dbReference>
<organism>
    <name type="scientific">Vibrio vulnificus (strain CMCP6)</name>
    <dbReference type="NCBI Taxonomy" id="216895"/>
    <lineage>
        <taxon>Bacteria</taxon>
        <taxon>Pseudomonadati</taxon>
        <taxon>Pseudomonadota</taxon>
        <taxon>Gammaproteobacteria</taxon>
        <taxon>Vibrionales</taxon>
        <taxon>Vibrionaceae</taxon>
        <taxon>Vibrio</taxon>
    </lineage>
</organism>
<gene>
    <name evidence="1" type="primary">fabV1</name>
    <name type="ordered locus">VV1_2829</name>
</gene>